<accession>A3LVX0</accession>
<protein>
    <recommendedName>
        <fullName>Ribosome biogenesis protein NSA1</fullName>
    </recommendedName>
</protein>
<evidence type="ECO:0000250" key="1"/>
<evidence type="ECO:0000305" key="2"/>
<name>NSA1_PICST</name>
<proteinExistence type="inferred from homology"/>
<organism>
    <name type="scientific">Scheffersomyces stipitis (strain ATCC 58785 / CBS 6054 / NBRC 10063 / NRRL Y-11545)</name>
    <name type="common">Yeast</name>
    <name type="synonym">Pichia stipitis</name>
    <dbReference type="NCBI Taxonomy" id="322104"/>
    <lineage>
        <taxon>Eukaryota</taxon>
        <taxon>Fungi</taxon>
        <taxon>Dikarya</taxon>
        <taxon>Ascomycota</taxon>
        <taxon>Saccharomycotina</taxon>
        <taxon>Pichiomycetes</taxon>
        <taxon>Debaryomycetaceae</taxon>
        <taxon>Scheffersomyces</taxon>
    </lineage>
</organism>
<reference key="1">
    <citation type="journal article" date="2007" name="Nat. Biotechnol.">
        <title>Genome sequence of the lignocellulose-bioconverting and xylose-fermenting yeast Pichia stipitis.</title>
        <authorList>
            <person name="Jeffries T.W."/>
            <person name="Grigoriev I.V."/>
            <person name="Grimwood J."/>
            <person name="Laplaza J.M."/>
            <person name="Aerts A."/>
            <person name="Salamov A."/>
            <person name="Schmutz J."/>
            <person name="Lindquist E."/>
            <person name="Dehal P."/>
            <person name="Shapiro H."/>
            <person name="Jin Y.-S."/>
            <person name="Passoth V."/>
            <person name="Richardson P.M."/>
        </authorList>
    </citation>
    <scope>NUCLEOTIDE SEQUENCE [LARGE SCALE GENOMIC DNA]</scope>
    <source>
        <strain>ATCC 58785 / CBS 6054 / NBRC 10063 / NRRL Y-11545</strain>
    </source>
</reference>
<keyword id="KW-0539">Nucleus</keyword>
<keyword id="KW-1185">Reference proteome</keyword>
<keyword id="KW-0690">Ribosome biogenesis</keyword>
<keyword id="KW-0698">rRNA processing</keyword>
<feature type="chain" id="PRO_0000320402" description="Ribosome biogenesis protein NSA1">
    <location>
        <begin position="1"/>
        <end position="430"/>
    </location>
</feature>
<dbReference type="EMBL" id="CP000499">
    <property type="protein sequence ID" value="ABN67189.2"/>
    <property type="molecule type" value="Genomic_DNA"/>
</dbReference>
<dbReference type="RefSeq" id="XP_001385218.2">
    <property type="nucleotide sequence ID" value="XM_001385181.1"/>
</dbReference>
<dbReference type="SMR" id="A3LVX0"/>
<dbReference type="FunCoup" id="A3LVX0">
    <property type="interactions" value="659"/>
</dbReference>
<dbReference type="STRING" id="322104.A3LVX0"/>
<dbReference type="GeneID" id="4839533"/>
<dbReference type="KEGG" id="pic:PICST_36366"/>
<dbReference type="eggNOG" id="KOG3881">
    <property type="taxonomic scope" value="Eukaryota"/>
</dbReference>
<dbReference type="HOGENOM" id="CLU_033769_4_0_1"/>
<dbReference type="InParanoid" id="A3LVX0"/>
<dbReference type="OMA" id="IWEAKNV"/>
<dbReference type="OrthoDB" id="18388at2759"/>
<dbReference type="Proteomes" id="UP000002258">
    <property type="component" value="Chromosome 5"/>
</dbReference>
<dbReference type="GO" id="GO:0005730">
    <property type="term" value="C:nucleolus"/>
    <property type="evidence" value="ECO:0007669"/>
    <property type="project" value="UniProtKB-SubCell"/>
</dbReference>
<dbReference type="GO" id="GO:0030687">
    <property type="term" value="C:preribosome, large subunit precursor"/>
    <property type="evidence" value="ECO:0007669"/>
    <property type="project" value="TreeGrafter"/>
</dbReference>
<dbReference type="GO" id="GO:0042273">
    <property type="term" value="P:ribosomal large subunit biogenesis"/>
    <property type="evidence" value="ECO:0007669"/>
    <property type="project" value="InterPro"/>
</dbReference>
<dbReference type="GO" id="GO:0006364">
    <property type="term" value="P:rRNA processing"/>
    <property type="evidence" value="ECO:0007669"/>
    <property type="project" value="UniProtKB-KW"/>
</dbReference>
<dbReference type="CDD" id="cd22858">
    <property type="entry name" value="Nsa1"/>
    <property type="match status" value="1"/>
</dbReference>
<dbReference type="Gene3D" id="2.130.10.10">
    <property type="entry name" value="YVTN repeat-like/Quinoprotein amine dehydrogenase"/>
    <property type="match status" value="1"/>
</dbReference>
<dbReference type="InterPro" id="IPR015943">
    <property type="entry name" value="WD40/YVTN_repeat-like_dom_sf"/>
</dbReference>
<dbReference type="InterPro" id="IPR036322">
    <property type="entry name" value="WD40_repeat_dom_sf"/>
</dbReference>
<dbReference type="InterPro" id="IPR037379">
    <property type="entry name" value="WDR74/Nsa1"/>
</dbReference>
<dbReference type="PANTHER" id="PTHR16038">
    <property type="entry name" value="NOP SEVEN ASSOCIATED PROTEIN 1"/>
    <property type="match status" value="1"/>
</dbReference>
<dbReference type="PANTHER" id="PTHR16038:SF4">
    <property type="entry name" value="WD REPEAT-CONTAINING PROTEIN 74"/>
    <property type="match status" value="1"/>
</dbReference>
<dbReference type="SUPFAM" id="SSF50978">
    <property type="entry name" value="WD40 repeat-like"/>
    <property type="match status" value="1"/>
</dbReference>
<comment type="function">
    <text evidence="1">Involved in the biogenesis of the 60S ribosomal subunit.</text>
</comment>
<comment type="subunit">
    <text evidence="1">Component of the pre-66S ribosomal particle.</text>
</comment>
<comment type="subcellular location">
    <subcellularLocation>
        <location evidence="1">Nucleus</location>
        <location evidence="1">Nucleolus</location>
    </subcellularLocation>
</comment>
<comment type="similarity">
    <text evidence="2">Belongs to the NSA1 family.</text>
</comment>
<gene>
    <name type="primary">NSA1</name>
    <name type="ORF">PICST_36366</name>
</gene>
<sequence length="430" mass="48859">MKFLVSSDDTGVVKEVICNRGTDTSKQDATQPISVKNFCTEPNCSRKNRIIHMINYQEKYLVAIRIGGELSVYEIADDEYEIEDEYKYNLLHNYKLEVSSSDKPISLFTVDILEAVAVAFSSGKVFFVNFNDDKFDKEPVLVQLPGGKEIAEFSKNPSVEGIFGYGGEENDVRIVKLYESDITSEIFDTENVENNFKSEVVFTAKNVKNDHLDLRVPVWITKIRFFTEQPEKGYKFITATHYGQIRVYDTNHGRRPVRDFTVCQKPILTLTFANEEESEVIISDSHNLIAKHSLIQVDDKASKTHSASAGDIIKPVAKLLGRFVDQFGATYGVEVGEGLLVTGGLDRYLRVFDLASREIVAKVYVGVEVSSVVVLDYEEEESQEEIVGDVELLKKSEKRKRTLPVVEREESDEEDLWNQLEEKDIKRKKS</sequence>